<accession>B4T9C2</accession>
<proteinExistence type="inferred from homology"/>
<evidence type="ECO:0000255" key="1">
    <source>
        <dbReference type="HAMAP-Rule" id="MF_00373"/>
    </source>
</evidence>
<evidence type="ECO:0000305" key="2"/>
<organism>
    <name type="scientific">Salmonella heidelberg (strain SL476)</name>
    <dbReference type="NCBI Taxonomy" id="454169"/>
    <lineage>
        <taxon>Bacteria</taxon>
        <taxon>Pseudomonadati</taxon>
        <taxon>Pseudomonadota</taxon>
        <taxon>Gammaproteobacteria</taxon>
        <taxon>Enterobacterales</taxon>
        <taxon>Enterobacteriaceae</taxon>
        <taxon>Salmonella</taxon>
    </lineage>
</organism>
<sequence>MSRVCQVTGKRPVTGNNRSHALNATKRRFLPNLHSHRFWVESEKRFVTLRVSAKGMRIIDKKGIETVLSELRARGEKY</sequence>
<protein>
    <recommendedName>
        <fullName evidence="1">Large ribosomal subunit protein bL28</fullName>
    </recommendedName>
    <alternativeName>
        <fullName evidence="2">50S ribosomal protein L28</fullName>
    </alternativeName>
</protein>
<gene>
    <name evidence="1" type="primary">rpmB</name>
    <name type="ordered locus">SeHA_C4054</name>
</gene>
<name>RL28_SALHS</name>
<comment type="similarity">
    <text evidence="1">Belongs to the bacterial ribosomal protein bL28 family.</text>
</comment>
<reference key="1">
    <citation type="journal article" date="2011" name="J. Bacteriol.">
        <title>Comparative genomics of 28 Salmonella enterica isolates: evidence for CRISPR-mediated adaptive sublineage evolution.</title>
        <authorList>
            <person name="Fricke W.F."/>
            <person name="Mammel M.K."/>
            <person name="McDermott P.F."/>
            <person name="Tartera C."/>
            <person name="White D.G."/>
            <person name="Leclerc J.E."/>
            <person name="Ravel J."/>
            <person name="Cebula T.A."/>
        </authorList>
    </citation>
    <scope>NUCLEOTIDE SEQUENCE [LARGE SCALE GENOMIC DNA]</scope>
    <source>
        <strain>SL476</strain>
    </source>
</reference>
<keyword id="KW-0687">Ribonucleoprotein</keyword>
<keyword id="KW-0689">Ribosomal protein</keyword>
<dbReference type="EMBL" id="CP001120">
    <property type="protein sequence ID" value="ACF70277.1"/>
    <property type="molecule type" value="Genomic_DNA"/>
</dbReference>
<dbReference type="RefSeq" id="WP_001519051.1">
    <property type="nucleotide sequence ID" value="NC_011083.1"/>
</dbReference>
<dbReference type="SMR" id="B4T9C2"/>
<dbReference type="KEGG" id="seh:SeHA_C4054"/>
<dbReference type="HOGENOM" id="CLU_064548_3_1_6"/>
<dbReference type="Proteomes" id="UP000001866">
    <property type="component" value="Chromosome"/>
</dbReference>
<dbReference type="GO" id="GO:0022625">
    <property type="term" value="C:cytosolic large ribosomal subunit"/>
    <property type="evidence" value="ECO:0007669"/>
    <property type="project" value="TreeGrafter"/>
</dbReference>
<dbReference type="GO" id="GO:0003735">
    <property type="term" value="F:structural constituent of ribosome"/>
    <property type="evidence" value="ECO:0007669"/>
    <property type="project" value="InterPro"/>
</dbReference>
<dbReference type="GO" id="GO:0006412">
    <property type="term" value="P:translation"/>
    <property type="evidence" value="ECO:0007669"/>
    <property type="project" value="UniProtKB-UniRule"/>
</dbReference>
<dbReference type="FunFam" id="2.30.170.40:FF:000001">
    <property type="entry name" value="50S ribosomal protein L28"/>
    <property type="match status" value="1"/>
</dbReference>
<dbReference type="Gene3D" id="2.30.170.40">
    <property type="entry name" value="Ribosomal protein L28/L24"/>
    <property type="match status" value="1"/>
</dbReference>
<dbReference type="HAMAP" id="MF_00373">
    <property type="entry name" value="Ribosomal_bL28"/>
    <property type="match status" value="1"/>
</dbReference>
<dbReference type="InterPro" id="IPR026569">
    <property type="entry name" value="Ribosomal_bL28"/>
</dbReference>
<dbReference type="InterPro" id="IPR034704">
    <property type="entry name" value="Ribosomal_bL28/bL31-like_sf"/>
</dbReference>
<dbReference type="InterPro" id="IPR001383">
    <property type="entry name" value="Ribosomal_bL28_bact-type"/>
</dbReference>
<dbReference type="InterPro" id="IPR037147">
    <property type="entry name" value="Ribosomal_bL28_sf"/>
</dbReference>
<dbReference type="NCBIfam" id="TIGR00009">
    <property type="entry name" value="L28"/>
    <property type="match status" value="1"/>
</dbReference>
<dbReference type="PANTHER" id="PTHR13528">
    <property type="entry name" value="39S RIBOSOMAL PROTEIN L28, MITOCHONDRIAL"/>
    <property type="match status" value="1"/>
</dbReference>
<dbReference type="PANTHER" id="PTHR13528:SF2">
    <property type="entry name" value="LARGE RIBOSOMAL SUBUNIT PROTEIN BL28M"/>
    <property type="match status" value="1"/>
</dbReference>
<dbReference type="Pfam" id="PF00830">
    <property type="entry name" value="Ribosomal_L28"/>
    <property type="match status" value="1"/>
</dbReference>
<dbReference type="SUPFAM" id="SSF143800">
    <property type="entry name" value="L28p-like"/>
    <property type="match status" value="1"/>
</dbReference>
<feature type="chain" id="PRO_1000121684" description="Large ribosomal subunit protein bL28">
    <location>
        <begin position="1"/>
        <end position="78"/>
    </location>
</feature>